<gene>
    <name type="primary">rps8</name>
</gene>
<keyword id="KW-0150">Chloroplast</keyword>
<keyword id="KW-0934">Plastid</keyword>
<keyword id="KW-0687">Ribonucleoprotein</keyword>
<keyword id="KW-0689">Ribosomal protein</keyword>
<keyword id="KW-0694">RNA-binding</keyword>
<keyword id="KW-0699">rRNA-binding</keyword>
<dbReference type="EMBL" id="AY835431">
    <property type="protein sequence ID" value="AAV80610.1"/>
    <property type="molecule type" value="Genomic_DNA"/>
</dbReference>
<dbReference type="RefSeq" id="YP_636186.1">
    <property type="nucleotide sequence ID" value="NC_008114.1"/>
</dbReference>
<dbReference type="SMR" id="Q3ZJ81"/>
<dbReference type="GeneID" id="4108790"/>
<dbReference type="GO" id="GO:0009507">
    <property type="term" value="C:chloroplast"/>
    <property type="evidence" value="ECO:0007669"/>
    <property type="project" value="UniProtKB-SubCell"/>
</dbReference>
<dbReference type="GO" id="GO:1990904">
    <property type="term" value="C:ribonucleoprotein complex"/>
    <property type="evidence" value="ECO:0007669"/>
    <property type="project" value="UniProtKB-KW"/>
</dbReference>
<dbReference type="GO" id="GO:0005840">
    <property type="term" value="C:ribosome"/>
    <property type="evidence" value="ECO:0007669"/>
    <property type="project" value="UniProtKB-KW"/>
</dbReference>
<dbReference type="GO" id="GO:0019843">
    <property type="term" value="F:rRNA binding"/>
    <property type="evidence" value="ECO:0007669"/>
    <property type="project" value="UniProtKB-UniRule"/>
</dbReference>
<dbReference type="GO" id="GO:0003735">
    <property type="term" value="F:structural constituent of ribosome"/>
    <property type="evidence" value="ECO:0007669"/>
    <property type="project" value="InterPro"/>
</dbReference>
<dbReference type="GO" id="GO:0006412">
    <property type="term" value="P:translation"/>
    <property type="evidence" value="ECO:0007669"/>
    <property type="project" value="UniProtKB-UniRule"/>
</dbReference>
<dbReference type="FunFam" id="3.30.1370.30:FF:000002">
    <property type="entry name" value="30S ribosomal protein S8"/>
    <property type="match status" value="1"/>
</dbReference>
<dbReference type="FunFam" id="3.30.1490.10:FF:000001">
    <property type="entry name" value="30S ribosomal protein S8"/>
    <property type="match status" value="1"/>
</dbReference>
<dbReference type="Gene3D" id="3.30.1370.30">
    <property type="match status" value="1"/>
</dbReference>
<dbReference type="Gene3D" id="3.30.1490.10">
    <property type="match status" value="1"/>
</dbReference>
<dbReference type="HAMAP" id="MF_01302_B">
    <property type="entry name" value="Ribosomal_uS8_B"/>
    <property type="match status" value="1"/>
</dbReference>
<dbReference type="InterPro" id="IPR000630">
    <property type="entry name" value="Ribosomal_uS8"/>
</dbReference>
<dbReference type="InterPro" id="IPR047863">
    <property type="entry name" value="Ribosomal_uS8_CS"/>
</dbReference>
<dbReference type="InterPro" id="IPR035987">
    <property type="entry name" value="Ribosomal_uS8_sf"/>
</dbReference>
<dbReference type="NCBIfam" id="NF001109">
    <property type="entry name" value="PRK00136.1"/>
    <property type="match status" value="1"/>
</dbReference>
<dbReference type="PANTHER" id="PTHR11758">
    <property type="entry name" value="40S RIBOSOMAL PROTEIN S15A"/>
    <property type="match status" value="1"/>
</dbReference>
<dbReference type="Pfam" id="PF00410">
    <property type="entry name" value="Ribosomal_S8"/>
    <property type="match status" value="1"/>
</dbReference>
<dbReference type="SUPFAM" id="SSF56047">
    <property type="entry name" value="Ribosomal protein S8"/>
    <property type="match status" value="1"/>
</dbReference>
<dbReference type="PROSITE" id="PS00053">
    <property type="entry name" value="RIBOSOMAL_S8"/>
    <property type="match status" value="1"/>
</dbReference>
<reference key="1">
    <citation type="journal article" date="2005" name="Mol. Biol. Evol.">
        <title>The chloroplast genome sequence of the green alga Pseudendoclonium akinetum (Ulvophyceae) reveals unusual structural features and new insights into the branching order of chlorophyte lineages.</title>
        <authorList>
            <person name="Pombert J.-F."/>
            <person name="Otis C."/>
            <person name="Lemieux C."/>
            <person name="Turmel M."/>
        </authorList>
    </citation>
    <scope>NUCLEOTIDE SEQUENCE [LARGE SCALE GENOMIC DNA]</scope>
    <source>
        <strain>UTEX 1912</strain>
    </source>
</reference>
<feature type="chain" id="PRO_0000225912" description="Small ribosomal subunit protein uS8c">
    <location>
        <begin position="1"/>
        <end position="131"/>
    </location>
</feature>
<organism>
    <name type="scientific">Tupiella akineta</name>
    <name type="common">Green alga</name>
    <name type="synonym">Pseudendoclonium akinetum</name>
    <dbReference type="NCBI Taxonomy" id="160070"/>
    <lineage>
        <taxon>Eukaryota</taxon>
        <taxon>Viridiplantae</taxon>
        <taxon>Chlorophyta</taxon>
        <taxon>Ulvophyceae</taxon>
        <taxon>OUU clade</taxon>
        <taxon>Ulotrichales</taxon>
        <taxon>Tupiellaceae</taxon>
        <taxon>Tupiella</taxon>
    </lineage>
</organism>
<comment type="function">
    <text evidence="1">One of the primary rRNA binding proteins, it binds directly to 16S rRNA central domain where it helps coordinate assembly of the platform of the 30S subunit.</text>
</comment>
<comment type="subunit">
    <text evidence="1">Part of the 30S ribosomal subunit.</text>
</comment>
<comment type="subcellular location">
    <subcellularLocation>
        <location>Plastid</location>
        <location>Chloroplast</location>
    </subcellularLocation>
</comment>
<comment type="similarity">
    <text evidence="2">Belongs to the universal ribosomal protein uS8 family.</text>
</comment>
<geneLocation type="chloroplast"/>
<accession>Q3ZJ81</accession>
<sequence>MIYDTISDMLTRIRNAYLVKHETVYVLNTKINRKISEILKKEGYIESVNLSTNSLQKLEITLKYLGNQKKPGITNLKRLSWPGLRFYSNYKDIPPVLNGMGVVILSTSKGIMTDREARANKVGGELLCSIW</sequence>
<name>RR8_TUPAK</name>
<evidence type="ECO:0000250" key="1"/>
<evidence type="ECO:0000305" key="2"/>
<proteinExistence type="inferred from homology"/>
<protein>
    <recommendedName>
        <fullName evidence="2">Small ribosomal subunit protein uS8c</fullName>
    </recommendedName>
    <alternativeName>
        <fullName>30S ribosomal protein S8, chloroplastic</fullName>
    </alternativeName>
</protein>